<organism>
    <name type="scientific">Stenotrophomonas maltophilia (strain K279a)</name>
    <dbReference type="NCBI Taxonomy" id="522373"/>
    <lineage>
        <taxon>Bacteria</taxon>
        <taxon>Pseudomonadati</taxon>
        <taxon>Pseudomonadota</taxon>
        <taxon>Gammaproteobacteria</taxon>
        <taxon>Lysobacterales</taxon>
        <taxon>Lysobacteraceae</taxon>
        <taxon>Stenotrophomonas</taxon>
        <taxon>Stenotrophomonas maltophilia group</taxon>
    </lineage>
</organism>
<evidence type="ECO:0000255" key="1">
    <source>
        <dbReference type="HAMAP-Rule" id="MF_00134"/>
    </source>
</evidence>
<proteinExistence type="inferred from homology"/>
<sequence>MSDILQTILARKAEEVAQRRAQRPLEELQAAVASAPPVRGFVRALQAAVANGDPAVIAEVKKASPSKGVIRPDFRPADIAVSYEFGGASCLSVLTDVDFFQGADAYLQQAREACTLPVLRKDFVIDAYQVYEARVLGADCILLIVAALDDTQLATLSELALSLGMDVLVEVHDIDELERALQVPAPMIGINNRNLRTFEVSLQTTLDMQQAVPRDRLLVTESGILGLQDVALMRDAGIHAFLVGEAFMRVEEPGEGLRQLFFAA</sequence>
<gene>
    <name evidence="1" type="primary">trpC</name>
    <name type="ordered locus">Smlt4309</name>
</gene>
<dbReference type="EC" id="4.1.1.48" evidence="1"/>
<dbReference type="EMBL" id="AM743169">
    <property type="protein sequence ID" value="CAQ47694.1"/>
    <property type="molecule type" value="Genomic_DNA"/>
</dbReference>
<dbReference type="RefSeq" id="WP_012481437.1">
    <property type="nucleotide sequence ID" value="NC_010943.1"/>
</dbReference>
<dbReference type="SMR" id="B2FKL1"/>
<dbReference type="EnsemblBacteria" id="CAQ47694">
    <property type="protein sequence ID" value="CAQ47694"/>
    <property type="gene ID" value="Smlt4309"/>
</dbReference>
<dbReference type="KEGG" id="sml:Smlt4309"/>
<dbReference type="PATRIC" id="fig|522373.3.peg.4078"/>
<dbReference type="eggNOG" id="COG0134">
    <property type="taxonomic scope" value="Bacteria"/>
</dbReference>
<dbReference type="HOGENOM" id="CLU_034247_2_0_6"/>
<dbReference type="UniPathway" id="UPA00035">
    <property type="reaction ID" value="UER00043"/>
</dbReference>
<dbReference type="Proteomes" id="UP000008840">
    <property type="component" value="Chromosome"/>
</dbReference>
<dbReference type="GO" id="GO:0004425">
    <property type="term" value="F:indole-3-glycerol-phosphate synthase activity"/>
    <property type="evidence" value="ECO:0007669"/>
    <property type="project" value="UniProtKB-UniRule"/>
</dbReference>
<dbReference type="GO" id="GO:0004640">
    <property type="term" value="F:phosphoribosylanthranilate isomerase activity"/>
    <property type="evidence" value="ECO:0007669"/>
    <property type="project" value="TreeGrafter"/>
</dbReference>
<dbReference type="GO" id="GO:0000162">
    <property type="term" value="P:L-tryptophan biosynthetic process"/>
    <property type="evidence" value="ECO:0007669"/>
    <property type="project" value="UniProtKB-UniRule"/>
</dbReference>
<dbReference type="CDD" id="cd00331">
    <property type="entry name" value="IGPS"/>
    <property type="match status" value="1"/>
</dbReference>
<dbReference type="FunFam" id="3.20.20.70:FF:000024">
    <property type="entry name" value="Indole-3-glycerol phosphate synthase"/>
    <property type="match status" value="1"/>
</dbReference>
<dbReference type="Gene3D" id="3.20.20.70">
    <property type="entry name" value="Aldolase class I"/>
    <property type="match status" value="1"/>
</dbReference>
<dbReference type="HAMAP" id="MF_00134_B">
    <property type="entry name" value="IGPS_B"/>
    <property type="match status" value="1"/>
</dbReference>
<dbReference type="InterPro" id="IPR013785">
    <property type="entry name" value="Aldolase_TIM"/>
</dbReference>
<dbReference type="InterPro" id="IPR045186">
    <property type="entry name" value="Indole-3-glycerol_P_synth"/>
</dbReference>
<dbReference type="InterPro" id="IPR013798">
    <property type="entry name" value="Indole-3-glycerol_P_synth_dom"/>
</dbReference>
<dbReference type="InterPro" id="IPR001468">
    <property type="entry name" value="Indole-3-GlycerolPSynthase_CS"/>
</dbReference>
<dbReference type="InterPro" id="IPR011060">
    <property type="entry name" value="RibuloseP-bd_barrel"/>
</dbReference>
<dbReference type="NCBIfam" id="NF001370">
    <property type="entry name" value="PRK00278.1-2"/>
    <property type="match status" value="1"/>
</dbReference>
<dbReference type="NCBIfam" id="NF001373">
    <property type="entry name" value="PRK00278.1-6"/>
    <property type="match status" value="1"/>
</dbReference>
<dbReference type="NCBIfam" id="NF001377">
    <property type="entry name" value="PRK00278.2-4"/>
    <property type="match status" value="1"/>
</dbReference>
<dbReference type="PANTHER" id="PTHR22854:SF2">
    <property type="entry name" value="INDOLE-3-GLYCEROL-PHOSPHATE SYNTHASE"/>
    <property type="match status" value="1"/>
</dbReference>
<dbReference type="PANTHER" id="PTHR22854">
    <property type="entry name" value="TRYPTOPHAN BIOSYNTHESIS PROTEIN"/>
    <property type="match status" value="1"/>
</dbReference>
<dbReference type="Pfam" id="PF00218">
    <property type="entry name" value="IGPS"/>
    <property type="match status" value="1"/>
</dbReference>
<dbReference type="SUPFAM" id="SSF51366">
    <property type="entry name" value="Ribulose-phoshate binding barrel"/>
    <property type="match status" value="1"/>
</dbReference>
<dbReference type="PROSITE" id="PS00614">
    <property type="entry name" value="IGPS"/>
    <property type="match status" value="1"/>
</dbReference>
<name>TRPC_STRMK</name>
<protein>
    <recommendedName>
        <fullName evidence="1">Indole-3-glycerol phosphate synthase</fullName>
        <shortName evidence="1">IGPS</shortName>
        <ecNumber evidence="1">4.1.1.48</ecNumber>
    </recommendedName>
</protein>
<reference key="1">
    <citation type="journal article" date="2008" name="Genome Biol.">
        <title>The complete genome, comparative and functional analysis of Stenotrophomonas maltophilia reveals an organism heavily shielded by drug resistance determinants.</title>
        <authorList>
            <person name="Crossman L.C."/>
            <person name="Gould V.C."/>
            <person name="Dow J.M."/>
            <person name="Vernikos G.S."/>
            <person name="Okazaki A."/>
            <person name="Sebaihia M."/>
            <person name="Saunders D."/>
            <person name="Arrowsmith C."/>
            <person name="Carver T."/>
            <person name="Peters N."/>
            <person name="Adlem E."/>
            <person name="Kerhornou A."/>
            <person name="Lord A."/>
            <person name="Murphy L."/>
            <person name="Seeger K."/>
            <person name="Squares R."/>
            <person name="Rutter S."/>
            <person name="Quail M.A."/>
            <person name="Rajandream M.A."/>
            <person name="Harris D."/>
            <person name="Churcher C."/>
            <person name="Bentley S.D."/>
            <person name="Parkhill J."/>
            <person name="Thomson N.R."/>
            <person name="Avison M.B."/>
        </authorList>
    </citation>
    <scope>NUCLEOTIDE SEQUENCE [LARGE SCALE GENOMIC DNA]</scope>
    <source>
        <strain>K279a</strain>
    </source>
</reference>
<comment type="catalytic activity">
    <reaction evidence="1">
        <text>1-(2-carboxyphenylamino)-1-deoxy-D-ribulose 5-phosphate + H(+) = (1S,2R)-1-C-(indol-3-yl)glycerol 3-phosphate + CO2 + H2O</text>
        <dbReference type="Rhea" id="RHEA:23476"/>
        <dbReference type="ChEBI" id="CHEBI:15377"/>
        <dbReference type="ChEBI" id="CHEBI:15378"/>
        <dbReference type="ChEBI" id="CHEBI:16526"/>
        <dbReference type="ChEBI" id="CHEBI:58613"/>
        <dbReference type="ChEBI" id="CHEBI:58866"/>
        <dbReference type="EC" id="4.1.1.48"/>
    </reaction>
</comment>
<comment type="pathway">
    <text evidence="1">Amino-acid biosynthesis; L-tryptophan biosynthesis; L-tryptophan from chorismate: step 4/5.</text>
</comment>
<comment type="similarity">
    <text evidence="1">Belongs to the TrpC family.</text>
</comment>
<feature type="chain" id="PRO_1000095896" description="Indole-3-glycerol phosphate synthase">
    <location>
        <begin position="1"/>
        <end position="264"/>
    </location>
</feature>
<keyword id="KW-0028">Amino-acid biosynthesis</keyword>
<keyword id="KW-0057">Aromatic amino acid biosynthesis</keyword>
<keyword id="KW-0210">Decarboxylase</keyword>
<keyword id="KW-0456">Lyase</keyword>
<keyword id="KW-1185">Reference proteome</keyword>
<keyword id="KW-0822">Tryptophan biosynthesis</keyword>
<accession>B2FKL1</accession>